<dbReference type="EMBL" id="CP000759">
    <property type="protein sequence ID" value="ABS15680.1"/>
    <property type="molecule type" value="Genomic_DNA"/>
</dbReference>
<dbReference type="RefSeq" id="WP_006468449.1">
    <property type="nucleotide sequence ID" value="NC_009668.1"/>
</dbReference>
<dbReference type="SMR" id="A6X376"/>
<dbReference type="STRING" id="439375.Oant_2972"/>
<dbReference type="GeneID" id="61315776"/>
<dbReference type="KEGG" id="oan:Oant_2972"/>
<dbReference type="eggNOG" id="COG0851">
    <property type="taxonomic scope" value="Bacteria"/>
</dbReference>
<dbReference type="HOGENOM" id="CLU_137929_2_0_5"/>
<dbReference type="Proteomes" id="UP000002301">
    <property type="component" value="Chromosome 2"/>
</dbReference>
<dbReference type="GO" id="GO:0051301">
    <property type="term" value="P:cell division"/>
    <property type="evidence" value="ECO:0007669"/>
    <property type="project" value="UniProtKB-KW"/>
</dbReference>
<dbReference type="GO" id="GO:0032955">
    <property type="term" value="P:regulation of division septum assembly"/>
    <property type="evidence" value="ECO:0007669"/>
    <property type="project" value="InterPro"/>
</dbReference>
<dbReference type="Gene3D" id="3.30.1070.10">
    <property type="entry name" value="Cell division topological specificity factor MinE"/>
    <property type="match status" value="1"/>
</dbReference>
<dbReference type="HAMAP" id="MF_00262">
    <property type="entry name" value="MinE"/>
    <property type="match status" value="1"/>
</dbReference>
<dbReference type="InterPro" id="IPR005527">
    <property type="entry name" value="MinE"/>
</dbReference>
<dbReference type="InterPro" id="IPR036707">
    <property type="entry name" value="MinE_sf"/>
</dbReference>
<dbReference type="NCBIfam" id="TIGR01215">
    <property type="entry name" value="minE"/>
    <property type="match status" value="1"/>
</dbReference>
<dbReference type="NCBIfam" id="NF001422">
    <property type="entry name" value="PRK00296.1"/>
    <property type="match status" value="1"/>
</dbReference>
<dbReference type="Pfam" id="PF03776">
    <property type="entry name" value="MinE"/>
    <property type="match status" value="1"/>
</dbReference>
<dbReference type="SUPFAM" id="SSF55229">
    <property type="entry name" value="Cell division protein MinE topological specificity domain"/>
    <property type="match status" value="1"/>
</dbReference>
<protein>
    <recommendedName>
        <fullName evidence="1">Cell division topological specificity factor</fullName>
    </recommendedName>
</protein>
<organism>
    <name type="scientific">Brucella anthropi (strain ATCC 49188 / DSM 6882 / CCUG 24695 / JCM 21032 / LMG 3331 / NBRC 15819 / NCTC 12168 / Alc 37)</name>
    <name type="common">Ochrobactrum anthropi</name>
    <dbReference type="NCBI Taxonomy" id="439375"/>
    <lineage>
        <taxon>Bacteria</taxon>
        <taxon>Pseudomonadati</taxon>
        <taxon>Pseudomonadota</taxon>
        <taxon>Alphaproteobacteria</taxon>
        <taxon>Hyphomicrobiales</taxon>
        <taxon>Brucellaceae</taxon>
        <taxon>Brucella/Ochrobactrum group</taxon>
        <taxon>Brucella</taxon>
    </lineage>
</organism>
<keyword id="KW-0131">Cell cycle</keyword>
<keyword id="KW-0132">Cell division</keyword>
<keyword id="KW-1185">Reference proteome</keyword>
<sequence>MSLFRFFSKPASAPQARERLQVLLAHERASHEHSDLVAVLREEILAVIAKHIQIDRDKVSVKMDRGDQMSTLEVDIELPLKTKAKVRAA</sequence>
<reference key="1">
    <citation type="journal article" date="2011" name="J. Bacteriol.">
        <title>Genome of Ochrobactrum anthropi ATCC 49188 T, a versatile opportunistic pathogen and symbiont of several eukaryotic hosts.</title>
        <authorList>
            <person name="Chain P.S."/>
            <person name="Lang D.M."/>
            <person name="Comerci D.J."/>
            <person name="Malfatti S.A."/>
            <person name="Vergez L.M."/>
            <person name="Shin M."/>
            <person name="Ugalde R.A."/>
            <person name="Garcia E."/>
            <person name="Tolmasky M.E."/>
        </authorList>
    </citation>
    <scope>NUCLEOTIDE SEQUENCE [LARGE SCALE GENOMIC DNA]</scope>
    <source>
        <strain>ATCC 49188 / DSM 6882 / CCUG 24695 / JCM 21032 / LMG 3331 / NBRC 15819 / NCTC 12168 / Alc 37</strain>
    </source>
</reference>
<proteinExistence type="inferred from homology"/>
<accession>A6X376</accession>
<feature type="chain" id="PRO_1000047789" description="Cell division topological specificity factor">
    <location>
        <begin position="1"/>
        <end position="89"/>
    </location>
</feature>
<comment type="function">
    <text evidence="1">Prevents the cell division inhibition by proteins MinC and MinD at internal division sites while permitting inhibition at polar sites. This ensures cell division at the proper site by restricting the formation of a division septum at the midpoint of the long axis of the cell.</text>
</comment>
<comment type="similarity">
    <text evidence="1">Belongs to the MinE family.</text>
</comment>
<evidence type="ECO:0000255" key="1">
    <source>
        <dbReference type="HAMAP-Rule" id="MF_00262"/>
    </source>
</evidence>
<gene>
    <name evidence="1" type="primary">minE</name>
    <name type="ordered locus">Oant_2972</name>
</gene>
<name>MINE_BRUA4</name>